<organism>
    <name type="scientific">Staphylococcus aureus (strain MW2)</name>
    <dbReference type="NCBI Taxonomy" id="196620"/>
    <lineage>
        <taxon>Bacteria</taxon>
        <taxon>Bacillati</taxon>
        <taxon>Bacillota</taxon>
        <taxon>Bacilli</taxon>
        <taxon>Bacillales</taxon>
        <taxon>Staphylococcaceae</taxon>
        <taxon>Staphylococcus</taxon>
    </lineage>
</organism>
<protein>
    <recommendedName>
        <fullName evidence="1">Phosphoenolpyruvate carboxykinase (ATP)</fullName>
        <shortName evidence="1">PCK</shortName>
        <shortName evidence="1">PEP carboxykinase</shortName>
        <shortName evidence="1">PEPCK</shortName>
        <ecNumber evidence="1">4.1.1.49</ecNumber>
    </recommendedName>
</protein>
<comment type="function">
    <text evidence="1">Involved in the gluconeogenesis. Catalyzes the conversion of oxaloacetate (OAA) to phosphoenolpyruvate (PEP) through direct phosphoryl transfer between the nucleoside triphosphate and OAA.</text>
</comment>
<comment type="catalytic activity">
    <reaction evidence="1">
        <text>oxaloacetate + ATP = phosphoenolpyruvate + ADP + CO2</text>
        <dbReference type="Rhea" id="RHEA:18617"/>
        <dbReference type="ChEBI" id="CHEBI:16452"/>
        <dbReference type="ChEBI" id="CHEBI:16526"/>
        <dbReference type="ChEBI" id="CHEBI:30616"/>
        <dbReference type="ChEBI" id="CHEBI:58702"/>
        <dbReference type="ChEBI" id="CHEBI:456216"/>
        <dbReference type="EC" id="4.1.1.49"/>
    </reaction>
</comment>
<comment type="cofactor">
    <cofactor evidence="1">
        <name>Mn(2+)</name>
        <dbReference type="ChEBI" id="CHEBI:29035"/>
    </cofactor>
    <text evidence="1">Binds 1 Mn(2+) ion per subunit.</text>
</comment>
<comment type="pathway">
    <text evidence="1">Carbohydrate biosynthesis; gluconeogenesis.</text>
</comment>
<comment type="subcellular location">
    <subcellularLocation>
        <location evidence="1">Cytoplasm</location>
    </subcellularLocation>
</comment>
<comment type="similarity">
    <text evidence="1">Belongs to the phosphoenolpyruvate carboxykinase (ATP) family.</text>
</comment>
<accession>Q8NVZ8</accession>
<evidence type="ECO:0000255" key="1">
    <source>
        <dbReference type="HAMAP-Rule" id="MF_00453"/>
    </source>
</evidence>
<sequence>MSVDTYTETTKIDKLLKKPTSHFQLSTTQLYNKILDNNEGVLTELGAVNASTGKYTGRSPKDKFFVSEPSYRDNIDWGEINQPIDEETFLKLYHKVLDYLDKKDELYVFKGYAGSDKDTMLKLTVINELAWHNLFAKNMFIRPESKEEATKIKPNFTIVSAPHFKADPEVDGTKSETFVIISFKHKVILIGGTEYAGEMKKGIFSVMNYLLPMQDIMSMHCSANVGEKGDVALFFGLSGTGKTTLSADPHRKLIGDDEHGWNKNGVFNIEGGCYAKAINLSKEKEPQIFDAIKYGAILENTVVAEDGSVDFEDNRYTENTRAAYPINHIDNIVVPSKAAHPNTIIFLTADAFGVIPPISKLNKDQAMYHFLSGFTSKLAGTERGVTEPEPSFSTCFGAPFFPLHPTVYADLLGELIDLHDVDVYLVNTGWTGGKYGVGRRISLHYTRQMVNQAISGKLKNAEYTKDSTFGLSIPVKIEDVPKTILNPINAWSDKEKYKAQAEDLIQRFEKNFEKFGEKVEHIAEKGSFNK</sequence>
<dbReference type="EC" id="4.1.1.49" evidence="1"/>
<dbReference type="EMBL" id="BA000033">
    <property type="protein sequence ID" value="BAB95594.1"/>
    <property type="molecule type" value="Genomic_DNA"/>
</dbReference>
<dbReference type="RefSeq" id="WP_000109910.1">
    <property type="nucleotide sequence ID" value="NC_003923.1"/>
</dbReference>
<dbReference type="SMR" id="Q8NVZ8"/>
<dbReference type="KEGG" id="sam:MW1729"/>
<dbReference type="HOGENOM" id="CLU_018247_0_1_9"/>
<dbReference type="UniPathway" id="UPA00138"/>
<dbReference type="GO" id="GO:0005829">
    <property type="term" value="C:cytosol"/>
    <property type="evidence" value="ECO:0007669"/>
    <property type="project" value="TreeGrafter"/>
</dbReference>
<dbReference type="GO" id="GO:0005524">
    <property type="term" value="F:ATP binding"/>
    <property type="evidence" value="ECO:0007669"/>
    <property type="project" value="UniProtKB-UniRule"/>
</dbReference>
<dbReference type="GO" id="GO:0046872">
    <property type="term" value="F:metal ion binding"/>
    <property type="evidence" value="ECO:0007669"/>
    <property type="project" value="UniProtKB-KW"/>
</dbReference>
<dbReference type="GO" id="GO:0004612">
    <property type="term" value="F:phosphoenolpyruvate carboxykinase (ATP) activity"/>
    <property type="evidence" value="ECO:0007669"/>
    <property type="project" value="UniProtKB-UniRule"/>
</dbReference>
<dbReference type="GO" id="GO:0006094">
    <property type="term" value="P:gluconeogenesis"/>
    <property type="evidence" value="ECO:0007669"/>
    <property type="project" value="UniProtKB-UniRule"/>
</dbReference>
<dbReference type="CDD" id="cd00484">
    <property type="entry name" value="PEPCK_ATP"/>
    <property type="match status" value="1"/>
</dbReference>
<dbReference type="FunFam" id="2.170.8.10:FF:000001">
    <property type="entry name" value="Phosphoenolpyruvate carboxykinase (ATP)"/>
    <property type="match status" value="1"/>
</dbReference>
<dbReference type="FunFam" id="3.40.449.10:FF:000001">
    <property type="entry name" value="Phosphoenolpyruvate carboxykinase (ATP)"/>
    <property type="match status" value="1"/>
</dbReference>
<dbReference type="Gene3D" id="3.90.228.20">
    <property type="match status" value="1"/>
</dbReference>
<dbReference type="Gene3D" id="3.40.449.10">
    <property type="entry name" value="Phosphoenolpyruvate Carboxykinase, domain 1"/>
    <property type="match status" value="1"/>
</dbReference>
<dbReference type="Gene3D" id="2.170.8.10">
    <property type="entry name" value="Phosphoenolpyruvate Carboxykinase, domain 2"/>
    <property type="match status" value="1"/>
</dbReference>
<dbReference type="HAMAP" id="MF_00453">
    <property type="entry name" value="PEPCK_ATP"/>
    <property type="match status" value="1"/>
</dbReference>
<dbReference type="InterPro" id="IPR001272">
    <property type="entry name" value="PEP_carboxykinase_ATP"/>
</dbReference>
<dbReference type="InterPro" id="IPR013035">
    <property type="entry name" value="PEP_carboxykinase_C"/>
</dbReference>
<dbReference type="InterPro" id="IPR008210">
    <property type="entry name" value="PEP_carboxykinase_N"/>
</dbReference>
<dbReference type="InterPro" id="IPR015994">
    <property type="entry name" value="PEPCK_ATP_CS"/>
</dbReference>
<dbReference type="NCBIfam" id="TIGR00224">
    <property type="entry name" value="pckA"/>
    <property type="match status" value="1"/>
</dbReference>
<dbReference type="NCBIfam" id="NF006820">
    <property type="entry name" value="PRK09344.1-2"/>
    <property type="match status" value="1"/>
</dbReference>
<dbReference type="NCBIfam" id="NF006821">
    <property type="entry name" value="PRK09344.1-3"/>
    <property type="match status" value="1"/>
</dbReference>
<dbReference type="PANTHER" id="PTHR30031:SF0">
    <property type="entry name" value="PHOSPHOENOLPYRUVATE CARBOXYKINASE (ATP)"/>
    <property type="match status" value="1"/>
</dbReference>
<dbReference type="PANTHER" id="PTHR30031">
    <property type="entry name" value="PHOSPHOENOLPYRUVATE CARBOXYKINASE ATP"/>
    <property type="match status" value="1"/>
</dbReference>
<dbReference type="Pfam" id="PF01293">
    <property type="entry name" value="PEPCK_ATP"/>
    <property type="match status" value="1"/>
</dbReference>
<dbReference type="PIRSF" id="PIRSF006294">
    <property type="entry name" value="PEP_crbxkin"/>
    <property type="match status" value="1"/>
</dbReference>
<dbReference type="SUPFAM" id="SSF68923">
    <property type="entry name" value="PEP carboxykinase N-terminal domain"/>
    <property type="match status" value="1"/>
</dbReference>
<dbReference type="SUPFAM" id="SSF53795">
    <property type="entry name" value="PEP carboxykinase-like"/>
    <property type="match status" value="1"/>
</dbReference>
<dbReference type="PROSITE" id="PS00532">
    <property type="entry name" value="PEPCK_ATP"/>
    <property type="match status" value="1"/>
</dbReference>
<name>PCKA_STAAW</name>
<feature type="chain" id="PRO_0000203849" description="Phosphoenolpyruvate carboxykinase (ATP)">
    <location>
        <begin position="1"/>
        <end position="530"/>
    </location>
</feature>
<feature type="binding site" evidence="1">
    <location>
        <position position="58"/>
    </location>
    <ligand>
        <name>substrate</name>
    </ligand>
</feature>
<feature type="binding site" evidence="1">
    <location>
        <position position="195"/>
    </location>
    <ligand>
        <name>substrate</name>
    </ligand>
</feature>
<feature type="binding site" evidence="1">
    <location>
        <position position="201"/>
    </location>
    <ligand>
        <name>ATP</name>
        <dbReference type="ChEBI" id="CHEBI:30616"/>
    </ligand>
</feature>
<feature type="binding site" evidence="1">
    <location>
        <position position="201"/>
    </location>
    <ligand>
        <name>Mn(2+)</name>
        <dbReference type="ChEBI" id="CHEBI:29035"/>
    </ligand>
</feature>
<feature type="binding site" evidence="1">
    <location>
        <position position="201"/>
    </location>
    <ligand>
        <name>substrate</name>
    </ligand>
</feature>
<feature type="binding site" evidence="1">
    <location>
        <position position="220"/>
    </location>
    <ligand>
        <name>ATP</name>
        <dbReference type="ChEBI" id="CHEBI:30616"/>
    </ligand>
</feature>
<feature type="binding site" evidence="1">
    <location>
        <position position="220"/>
    </location>
    <ligand>
        <name>Mn(2+)</name>
        <dbReference type="ChEBI" id="CHEBI:29035"/>
    </ligand>
</feature>
<feature type="binding site" evidence="1">
    <location>
        <begin position="236"/>
        <end position="244"/>
    </location>
    <ligand>
        <name>ATP</name>
        <dbReference type="ChEBI" id="CHEBI:30616"/>
    </ligand>
</feature>
<feature type="binding site" evidence="1">
    <location>
        <position position="257"/>
    </location>
    <ligand>
        <name>Mn(2+)</name>
        <dbReference type="ChEBI" id="CHEBI:29035"/>
    </ligand>
</feature>
<feature type="binding site" evidence="1">
    <location>
        <position position="285"/>
    </location>
    <ligand>
        <name>ATP</name>
        <dbReference type="ChEBI" id="CHEBI:30616"/>
    </ligand>
</feature>
<feature type="binding site" evidence="1">
    <location>
        <position position="321"/>
    </location>
    <ligand>
        <name>ATP</name>
        <dbReference type="ChEBI" id="CHEBI:30616"/>
    </ligand>
</feature>
<feature type="binding site" evidence="1">
    <location>
        <position position="321"/>
    </location>
    <ligand>
        <name>substrate</name>
    </ligand>
</feature>
<feature type="binding site" evidence="1">
    <location>
        <begin position="440"/>
        <end position="441"/>
    </location>
    <ligand>
        <name>ATP</name>
        <dbReference type="ChEBI" id="CHEBI:30616"/>
    </ligand>
</feature>
<feature type="binding site" evidence="1">
    <location>
        <position position="446"/>
    </location>
    <ligand>
        <name>ATP</name>
        <dbReference type="ChEBI" id="CHEBI:30616"/>
    </ligand>
</feature>
<reference key="1">
    <citation type="journal article" date="2002" name="Lancet">
        <title>Genome and virulence determinants of high virulence community-acquired MRSA.</title>
        <authorList>
            <person name="Baba T."/>
            <person name="Takeuchi F."/>
            <person name="Kuroda M."/>
            <person name="Yuzawa H."/>
            <person name="Aoki K."/>
            <person name="Oguchi A."/>
            <person name="Nagai Y."/>
            <person name="Iwama N."/>
            <person name="Asano K."/>
            <person name="Naimi T."/>
            <person name="Kuroda H."/>
            <person name="Cui L."/>
            <person name="Yamamoto K."/>
            <person name="Hiramatsu K."/>
        </authorList>
    </citation>
    <scope>NUCLEOTIDE SEQUENCE [LARGE SCALE GENOMIC DNA]</scope>
    <source>
        <strain>MW2</strain>
    </source>
</reference>
<gene>
    <name evidence="1" type="primary">pckA</name>
    <name type="ordered locus">MW1729</name>
</gene>
<keyword id="KW-0067">ATP-binding</keyword>
<keyword id="KW-0963">Cytoplasm</keyword>
<keyword id="KW-0210">Decarboxylase</keyword>
<keyword id="KW-0312">Gluconeogenesis</keyword>
<keyword id="KW-0456">Lyase</keyword>
<keyword id="KW-0464">Manganese</keyword>
<keyword id="KW-0479">Metal-binding</keyword>
<keyword id="KW-0547">Nucleotide-binding</keyword>
<proteinExistence type="inferred from homology"/>